<feature type="chain" id="PRO_0000179684" description="ATP-dependent Clp protease proteolytic subunit 2">
    <location>
        <begin position="1"/>
        <end position="199"/>
    </location>
</feature>
<feature type="active site" description="Nucleophile" evidence="1">
    <location>
        <position position="101"/>
    </location>
</feature>
<feature type="active site" evidence="1">
    <location>
        <position position="126"/>
    </location>
</feature>
<reference key="1">
    <citation type="journal article" date="2007" name="Photosyn. Res.">
        <title>Complete nucleotide sequence of the freshwater unicellular cyanobacterium Synechococcus elongatus PCC 6301 chromosome: gene content and organization.</title>
        <authorList>
            <person name="Sugita C."/>
            <person name="Ogata K."/>
            <person name="Shikata M."/>
            <person name="Jikuya H."/>
            <person name="Takano J."/>
            <person name="Furumichi M."/>
            <person name="Kanehisa M."/>
            <person name="Omata T."/>
            <person name="Sugiura M."/>
            <person name="Sugita M."/>
        </authorList>
    </citation>
    <scope>NUCLEOTIDE SEQUENCE [LARGE SCALE GENOMIC DNA]</scope>
    <source>
        <strain>ATCC 27144 / PCC 6301 / SAUG 1402/1</strain>
    </source>
</reference>
<dbReference type="EC" id="3.4.21.92" evidence="1"/>
<dbReference type="EMBL" id="AP008231">
    <property type="protein sequence ID" value="BAD79763.1"/>
    <property type="molecule type" value="Genomic_DNA"/>
</dbReference>
<dbReference type="RefSeq" id="WP_011243883.1">
    <property type="nucleotide sequence ID" value="NZ_CP085785.1"/>
</dbReference>
<dbReference type="SMR" id="Q5N1Q7"/>
<dbReference type="MEROPS" id="S14.001"/>
<dbReference type="KEGG" id="syc:syc1573_d"/>
<dbReference type="eggNOG" id="COG0740">
    <property type="taxonomic scope" value="Bacteria"/>
</dbReference>
<dbReference type="Proteomes" id="UP000001175">
    <property type="component" value="Chromosome"/>
</dbReference>
<dbReference type="GO" id="GO:0005737">
    <property type="term" value="C:cytoplasm"/>
    <property type="evidence" value="ECO:0007669"/>
    <property type="project" value="UniProtKB-SubCell"/>
</dbReference>
<dbReference type="GO" id="GO:0009368">
    <property type="term" value="C:endopeptidase Clp complex"/>
    <property type="evidence" value="ECO:0007669"/>
    <property type="project" value="TreeGrafter"/>
</dbReference>
<dbReference type="GO" id="GO:0004176">
    <property type="term" value="F:ATP-dependent peptidase activity"/>
    <property type="evidence" value="ECO:0007669"/>
    <property type="project" value="InterPro"/>
</dbReference>
<dbReference type="GO" id="GO:0051117">
    <property type="term" value="F:ATPase binding"/>
    <property type="evidence" value="ECO:0007669"/>
    <property type="project" value="TreeGrafter"/>
</dbReference>
<dbReference type="GO" id="GO:0004252">
    <property type="term" value="F:serine-type endopeptidase activity"/>
    <property type="evidence" value="ECO:0007669"/>
    <property type="project" value="UniProtKB-UniRule"/>
</dbReference>
<dbReference type="GO" id="GO:0006515">
    <property type="term" value="P:protein quality control for misfolded or incompletely synthesized proteins"/>
    <property type="evidence" value="ECO:0007669"/>
    <property type="project" value="TreeGrafter"/>
</dbReference>
<dbReference type="CDD" id="cd07017">
    <property type="entry name" value="S14_ClpP_2"/>
    <property type="match status" value="1"/>
</dbReference>
<dbReference type="FunFam" id="3.90.226.10:FF:000001">
    <property type="entry name" value="ATP-dependent Clp protease proteolytic subunit"/>
    <property type="match status" value="1"/>
</dbReference>
<dbReference type="Gene3D" id="3.90.226.10">
    <property type="entry name" value="2-enoyl-CoA Hydratase, Chain A, domain 1"/>
    <property type="match status" value="1"/>
</dbReference>
<dbReference type="HAMAP" id="MF_00444">
    <property type="entry name" value="ClpP"/>
    <property type="match status" value="1"/>
</dbReference>
<dbReference type="InterPro" id="IPR001907">
    <property type="entry name" value="ClpP"/>
</dbReference>
<dbReference type="InterPro" id="IPR029045">
    <property type="entry name" value="ClpP/crotonase-like_dom_sf"/>
</dbReference>
<dbReference type="InterPro" id="IPR023562">
    <property type="entry name" value="ClpP/TepA"/>
</dbReference>
<dbReference type="InterPro" id="IPR033135">
    <property type="entry name" value="ClpP_His_AS"/>
</dbReference>
<dbReference type="InterPro" id="IPR018215">
    <property type="entry name" value="ClpP_Ser_AS"/>
</dbReference>
<dbReference type="NCBIfam" id="NF001368">
    <property type="entry name" value="PRK00277.1"/>
    <property type="match status" value="1"/>
</dbReference>
<dbReference type="NCBIfam" id="NF009205">
    <property type="entry name" value="PRK12553.1"/>
    <property type="match status" value="1"/>
</dbReference>
<dbReference type="PANTHER" id="PTHR10381">
    <property type="entry name" value="ATP-DEPENDENT CLP PROTEASE PROTEOLYTIC SUBUNIT"/>
    <property type="match status" value="1"/>
</dbReference>
<dbReference type="PANTHER" id="PTHR10381:SF70">
    <property type="entry name" value="ATP-DEPENDENT CLP PROTEASE PROTEOLYTIC SUBUNIT"/>
    <property type="match status" value="1"/>
</dbReference>
<dbReference type="Pfam" id="PF00574">
    <property type="entry name" value="CLP_protease"/>
    <property type="match status" value="1"/>
</dbReference>
<dbReference type="PRINTS" id="PR00127">
    <property type="entry name" value="CLPPROTEASEP"/>
</dbReference>
<dbReference type="SUPFAM" id="SSF52096">
    <property type="entry name" value="ClpP/crotonase"/>
    <property type="match status" value="1"/>
</dbReference>
<dbReference type="PROSITE" id="PS00382">
    <property type="entry name" value="CLP_PROTEASE_HIS"/>
    <property type="match status" value="1"/>
</dbReference>
<dbReference type="PROSITE" id="PS00381">
    <property type="entry name" value="CLP_PROTEASE_SER"/>
    <property type="match status" value="1"/>
</dbReference>
<accession>Q5N1Q7</accession>
<name>CLPP2_SYNP6</name>
<protein>
    <recommendedName>
        <fullName evidence="1">ATP-dependent Clp protease proteolytic subunit 2</fullName>
        <ecNumber evidence="1">3.4.21.92</ecNumber>
    </recommendedName>
    <alternativeName>
        <fullName evidence="1">Endopeptidase Clp 2</fullName>
    </alternativeName>
</protein>
<sequence length="199" mass="22080">MPIGVPSVPYRLPGSSFERWIDIYNRLAMERIIFLGQEVTDGLANSIVAQLLYLDSEDSSKPIYLYINSPGGSVTAGMAIYDTMQYIKSPVITICLGLAASMGAFLLCAGSKGKRLALPHSRIMIHQPLGGTGRRQASDIEIEAKEILRIKKLLNQIMADRTGQPLEKIEKDTDRDYFMSAEEAREYGLIDQVIAERPV</sequence>
<evidence type="ECO:0000255" key="1">
    <source>
        <dbReference type="HAMAP-Rule" id="MF_00444"/>
    </source>
</evidence>
<proteinExistence type="inferred from homology"/>
<gene>
    <name evidence="1" type="primary">clpP2</name>
    <name type="ordered locus">syc1573_d</name>
</gene>
<comment type="function">
    <text evidence="1">Cleaves peptides in various proteins in a process that requires ATP hydrolysis. Has a chymotrypsin-like activity. Plays a major role in the degradation of misfolded proteins.</text>
</comment>
<comment type="catalytic activity">
    <reaction evidence="1">
        <text>Hydrolysis of proteins to small peptides in the presence of ATP and magnesium. alpha-casein is the usual test substrate. In the absence of ATP, only oligopeptides shorter than five residues are hydrolyzed (such as succinyl-Leu-Tyr-|-NHMec, and Leu-Tyr-Leu-|-Tyr-Trp, in which cleavage of the -Tyr-|-Leu- and -Tyr-|-Trp bonds also occurs).</text>
        <dbReference type="EC" id="3.4.21.92"/>
    </reaction>
</comment>
<comment type="subunit">
    <text evidence="1">Fourteen ClpP subunits assemble into 2 heptameric rings which stack back to back to give a disk-like structure with a central cavity, resembling the structure of eukaryotic proteasomes.</text>
</comment>
<comment type="subcellular location">
    <subcellularLocation>
        <location evidence="1">Cytoplasm</location>
    </subcellularLocation>
</comment>
<comment type="similarity">
    <text evidence="1">Belongs to the peptidase S14 family.</text>
</comment>
<keyword id="KW-0963">Cytoplasm</keyword>
<keyword id="KW-0378">Hydrolase</keyword>
<keyword id="KW-0645">Protease</keyword>
<keyword id="KW-0720">Serine protease</keyword>
<organism>
    <name type="scientific">Synechococcus sp. (strain ATCC 27144 / PCC 6301 / SAUG 1402/1)</name>
    <name type="common">Anacystis nidulans</name>
    <dbReference type="NCBI Taxonomy" id="269084"/>
    <lineage>
        <taxon>Bacteria</taxon>
        <taxon>Bacillati</taxon>
        <taxon>Cyanobacteriota</taxon>
        <taxon>Cyanophyceae</taxon>
        <taxon>Synechococcales</taxon>
        <taxon>Synechococcaceae</taxon>
        <taxon>Synechococcus</taxon>
    </lineage>
</organism>